<dbReference type="EMBL" id="CP000563">
    <property type="protein sequence ID" value="ABN62712.1"/>
    <property type="molecule type" value="Genomic_DNA"/>
</dbReference>
<dbReference type="RefSeq" id="WP_006082709.1">
    <property type="nucleotide sequence ID" value="NC_009052.1"/>
</dbReference>
<dbReference type="SMR" id="A3D7J9"/>
<dbReference type="STRING" id="325240.Sbal_3232"/>
<dbReference type="KEGG" id="sbl:Sbal_3232"/>
<dbReference type="HOGENOM" id="CLU_002794_2_1_6"/>
<dbReference type="OrthoDB" id="9804431at2"/>
<dbReference type="Proteomes" id="UP000001557">
    <property type="component" value="Chromosome"/>
</dbReference>
<dbReference type="GO" id="GO:0005829">
    <property type="term" value="C:cytosol"/>
    <property type="evidence" value="ECO:0007669"/>
    <property type="project" value="TreeGrafter"/>
</dbReference>
<dbReference type="GO" id="GO:0005525">
    <property type="term" value="F:GTP binding"/>
    <property type="evidence" value="ECO:0007669"/>
    <property type="project" value="UniProtKB-UniRule"/>
</dbReference>
<dbReference type="GO" id="GO:0003924">
    <property type="term" value="F:GTPase activity"/>
    <property type="evidence" value="ECO:0007669"/>
    <property type="project" value="InterPro"/>
</dbReference>
<dbReference type="GO" id="GO:0097216">
    <property type="term" value="F:guanosine tetraphosphate binding"/>
    <property type="evidence" value="ECO:0007669"/>
    <property type="project" value="UniProtKB-ARBA"/>
</dbReference>
<dbReference type="GO" id="GO:0016150">
    <property type="term" value="F:translation release factor activity, codon nonspecific"/>
    <property type="evidence" value="ECO:0007669"/>
    <property type="project" value="TreeGrafter"/>
</dbReference>
<dbReference type="GO" id="GO:0016149">
    <property type="term" value="F:translation release factor activity, codon specific"/>
    <property type="evidence" value="ECO:0007669"/>
    <property type="project" value="UniProtKB-UniRule"/>
</dbReference>
<dbReference type="GO" id="GO:0006449">
    <property type="term" value="P:regulation of translational termination"/>
    <property type="evidence" value="ECO:0007669"/>
    <property type="project" value="UniProtKB-UniRule"/>
</dbReference>
<dbReference type="CDD" id="cd04169">
    <property type="entry name" value="RF3"/>
    <property type="match status" value="1"/>
</dbReference>
<dbReference type="CDD" id="cd03689">
    <property type="entry name" value="RF3_II"/>
    <property type="match status" value="1"/>
</dbReference>
<dbReference type="CDD" id="cd16259">
    <property type="entry name" value="RF3_III"/>
    <property type="match status" value="1"/>
</dbReference>
<dbReference type="FunFam" id="2.40.30.10:FF:000040">
    <property type="entry name" value="Peptide chain release factor 3"/>
    <property type="match status" value="1"/>
</dbReference>
<dbReference type="FunFam" id="3.30.70.3280:FF:000001">
    <property type="entry name" value="Peptide chain release factor 3"/>
    <property type="match status" value="1"/>
</dbReference>
<dbReference type="FunFam" id="3.40.50.300:FF:000542">
    <property type="entry name" value="Peptide chain release factor 3"/>
    <property type="match status" value="1"/>
</dbReference>
<dbReference type="Gene3D" id="3.40.50.300">
    <property type="entry name" value="P-loop containing nucleotide triphosphate hydrolases"/>
    <property type="match status" value="2"/>
</dbReference>
<dbReference type="Gene3D" id="3.30.70.3280">
    <property type="entry name" value="Peptide chain release factor 3, domain III"/>
    <property type="match status" value="1"/>
</dbReference>
<dbReference type="HAMAP" id="MF_00072">
    <property type="entry name" value="Rel_fac_3"/>
    <property type="match status" value="1"/>
</dbReference>
<dbReference type="InterPro" id="IPR053905">
    <property type="entry name" value="EF-G-like_DII"/>
</dbReference>
<dbReference type="InterPro" id="IPR035647">
    <property type="entry name" value="EFG_III/V"/>
</dbReference>
<dbReference type="InterPro" id="IPR031157">
    <property type="entry name" value="G_TR_CS"/>
</dbReference>
<dbReference type="InterPro" id="IPR027417">
    <property type="entry name" value="P-loop_NTPase"/>
</dbReference>
<dbReference type="InterPro" id="IPR004548">
    <property type="entry name" value="PrfC"/>
</dbReference>
<dbReference type="InterPro" id="IPR032090">
    <property type="entry name" value="RF3_C"/>
</dbReference>
<dbReference type="InterPro" id="IPR038467">
    <property type="entry name" value="RF3_dom_3_sf"/>
</dbReference>
<dbReference type="InterPro" id="IPR041732">
    <property type="entry name" value="RF3_GTP-bd"/>
</dbReference>
<dbReference type="InterPro" id="IPR005225">
    <property type="entry name" value="Small_GTP-bd"/>
</dbReference>
<dbReference type="InterPro" id="IPR000795">
    <property type="entry name" value="T_Tr_GTP-bd_dom"/>
</dbReference>
<dbReference type="InterPro" id="IPR009000">
    <property type="entry name" value="Transl_B-barrel_sf"/>
</dbReference>
<dbReference type="NCBIfam" id="TIGR00503">
    <property type="entry name" value="prfC"/>
    <property type="match status" value="1"/>
</dbReference>
<dbReference type="NCBIfam" id="NF001964">
    <property type="entry name" value="PRK00741.1"/>
    <property type="match status" value="1"/>
</dbReference>
<dbReference type="NCBIfam" id="TIGR00231">
    <property type="entry name" value="small_GTP"/>
    <property type="match status" value="1"/>
</dbReference>
<dbReference type="PANTHER" id="PTHR43556">
    <property type="entry name" value="PEPTIDE CHAIN RELEASE FACTOR RF3"/>
    <property type="match status" value="1"/>
</dbReference>
<dbReference type="PANTHER" id="PTHR43556:SF2">
    <property type="entry name" value="PEPTIDE CHAIN RELEASE FACTOR RF3"/>
    <property type="match status" value="1"/>
</dbReference>
<dbReference type="Pfam" id="PF22042">
    <property type="entry name" value="EF-G_D2"/>
    <property type="match status" value="1"/>
</dbReference>
<dbReference type="Pfam" id="PF00009">
    <property type="entry name" value="GTP_EFTU"/>
    <property type="match status" value="1"/>
</dbReference>
<dbReference type="Pfam" id="PF16658">
    <property type="entry name" value="RF3_C"/>
    <property type="match status" value="1"/>
</dbReference>
<dbReference type="PRINTS" id="PR00315">
    <property type="entry name" value="ELONGATNFCT"/>
</dbReference>
<dbReference type="SUPFAM" id="SSF54980">
    <property type="entry name" value="EF-G C-terminal domain-like"/>
    <property type="match status" value="1"/>
</dbReference>
<dbReference type="SUPFAM" id="SSF52540">
    <property type="entry name" value="P-loop containing nucleoside triphosphate hydrolases"/>
    <property type="match status" value="1"/>
</dbReference>
<dbReference type="SUPFAM" id="SSF50447">
    <property type="entry name" value="Translation proteins"/>
    <property type="match status" value="1"/>
</dbReference>
<dbReference type="PROSITE" id="PS00301">
    <property type="entry name" value="G_TR_1"/>
    <property type="match status" value="1"/>
</dbReference>
<dbReference type="PROSITE" id="PS51722">
    <property type="entry name" value="G_TR_2"/>
    <property type="match status" value="1"/>
</dbReference>
<comment type="function">
    <text evidence="1">Increases the formation of ribosomal termination complexes and stimulates activities of RF-1 and RF-2. It binds guanine nucleotides and has strong preference for UGA stop codons. It may interact directly with the ribosome. The stimulation of RF-1 and RF-2 is significantly reduced by GTP and GDP, but not by GMP.</text>
</comment>
<comment type="subcellular location">
    <subcellularLocation>
        <location evidence="1">Cytoplasm</location>
    </subcellularLocation>
</comment>
<comment type="similarity">
    <text evidence="1">Belongs to the TRAFAC class translation factor GTPase superfamily. Classic translation factor GTPase family. PrfC subfamily.</text>
</comment>
<protein>
    <recommendedName>
        <fullName evidence="1">Peptide chain release factor 3</fullName>
        <shortName evidence="1">RF-3</shortName>
    </recommendedName>
</protein>
<evidence type="ECO:0000255" key="1">
    <source>
        <dbReference type="HAMAP-Rule" id="MF_00072"/>
    </source>
</evidence>
<organism>
    <name type="scientific">Shewanella baltica (strain OS155 / ATCC BAA-1091)</name>
    <dbReference type="NCBI Taxonomy" id="325240"/>
    <lineage>
        <taxon>Bacteria</taxon>
        <taxon>Pseudomonadati</taxon>
        <taxon>Pseudomonadota</taxon>
        <taxon>Gammaproteobacteria</taxon>
        <taxon>Alteromonadales</taxon>
        <taxon>Shewanellaceae</taxon>
        <taxon>Shewanella</taxon>
    </lineage>
</organism>
<sequence length="526" mass="59278">MSGNKVEVDKRRTFAIISHPDAGKTTITEKVLLFGNALQKAGTVKGKKSGQHAKSDWMEMEKDRGISITTSVMQFPYGGALVNLLDTPGHEDFSEDTYRTLTAVDSCLMVIDSAKGVEERTIKLMEVTRLRDTPIVTFMNKLDRDIRDPIDLMDEVESVLNIACAPITWPIGSGKEFKGIYHILRDEVVLYQGGMGHTIQERRVIKGINNPDLEKAIGSYAADLRDEMELVRGASHEFDHAAFLKGELTPVFFGTALGNFGVDHILDGIVEWAPKPLPRESDTRVIMPDEEKFTGFVFKIQANMDPKHRDRVAFMRVCSGRYEQGMKMHHVRIGKDVNVSDALTFMAGDRERAEEAYPGDIIGLHNHGTIRIGDTFTQGEKFRFTGVPNFAPEMFRRIRLRDPLKQKQLLKGLVQLSEEGAVQVFRPIDTNDLIVGAVGVLQFEVVVGRLKSEYNVEAIYEGISVSTARWVYCKDERKLEEFRRKCSQNLALDGGDNLTYIAPTMVNLNLSMERYPDIEFAKTREH</sequence>
<reference key="1">
    <citation type="submission" date="2007-02" db="EMBL/GenBank/DDBJ databases">
        <title>Complete sequence of chromosome of Shewanella baltica OS155.</title>
        <authorList>
            <consortium name="US DOE Joint Genome Institute"/>
            <person name="Copeland A."/>
            <person name="Lucas S."/>
            <person name="Lapidus A."/>
            <person name="Barry K."/>
            <person name="Detter J.C."/>
            <person name="Glavina del Rio T."/>
            <person name="Hammon N."/>
            <person name="Israni S."/>
            <person name="Dalin E."/>
            <person name="Tice H."/>
            <person name="Pitluck S."/>
            <person name="Sims D.R."/>
            <person name="Brettin T."/>
            <person name="Bruce D."/>
            <person name="Han C."/>
            <person name="Tapia R."/>
            <person name="Brainard J."/>
            <person name="Schmutz J."/>
            <person name="Larimer F."/>
            <person name="Land M."/>
            <person name="Hauser L."/>
            <person name="Kyrpides N."/>
            <person name="Mikhailova N."/>
            <person name="Brettar I."/>
            <person name="Klappenbach J."/>
            <person name="Konstantinidis K."/>
            <person name="Rodrigues J."/>
            <person name="Tiedje J."/>
            <person name="Richardson P."/>
        </authorList>
    </citation>
    <scope>NUCLEOTIDE SEQUENCE [LARGE SCALE GENOMIC DNA]</scope>
    <source>
        <strain>OS155 / ATCC BAA-1091</strain>
    </source>
</reference>
<name>RF3_SHEB5</name>
<feature type="chain" id="PRO_1000023674" description="Peptide chain release factor 3">
    <location>
        <begin position="1"/>
        <end position="526"/>
    </location>
</feature>
<feature type="domain" description="tr-type G">
    <location>
        <begin position="9"/>
        <end position="277"/>
    </location>
</feature>
<feature type="binding site" evidence="1">
    <location>
        <begin position="18"/>
        <end position="25"/>
    </location>
    <ligand>
        <name>GTP</name>
        <dbReference type="ChEBI" id="CHEBI:37565"/>
    </ligand>
</feature>
<feature type="binding site" evidence="1">
    <location>
        <begin position="86"/>
        <end position="90"/>
    </location>
    <ligand>
        <name>GTP</name>
        <dbReference type="ChEBI" id="CHEBI:37565"/>
    </ligand>
</feature>
<feature type="binding site" evidence="1">
    <location>
        <begin position="140"/>
        <end position="143"/>
    </location>
    <ligand>
        <name>GTP</name>
        <dbReference type="ChEBI" id="CHEBI:37565"/>
    </ligand>
</feature>
<accession>A3D7J9</accession>
<keyword id="KW-0963">Cytoplasm</keyword>
<keyword id="KW-0342">GTP-binding</keyword>
<keyword id="KW-0547">Nucleotide-binding</keyword>
<keyword id="KW-0648">Protein biosynthesis</keyword>
<keyword id="KW-1185">Reference proteome</keyword>
<proteinExistence type="inferred from homology"/>
<gene>
    <name evidence="1" type="primary">prfC</name>
    <name type="ordered locus">Sbal_3232</name>
</gene>